<feature type="chain" id="PRO_1000191157" description="Adenylate kinase">
    <location>
        <begin position="1"/>
        <end position="181"/>
    </location>
</feature>
<feature type="region of interest" description="NMP" evidence="1">
    <location>
        <begin position="30"/>
        <end position="59"/>
    </location>
</feature>
<feature type="region of interest" description="LID" evidence="1">
    <location>
        <begin position="126"/>
        <end position="132"/>
    </location>
</feature>
<feature type="binding site" evidence="1">
    <location>
        <begin position="10"/>
        <end position="15"/>
    </location>
    <ligand>
        <name>ATP</name>
        <dbReference type="ChEBI" id="CHEBI:30616"/>
    </ligand>
</feature>
<feature type="binding site" evidence="1">
    <location>
        <position position="31"/>
    </location>
    <ligand>
        <name>AMP</name>
        <dbReference type="ChEBI" id="CHEBI:456215"/>
    </ligand>
</feature>
<feature type="binding site" evidence="1">
    <location>
        <position position="36"/>
    </location>
    <ligand>
        <name>AMP</name>
        <dbReference type="ChEBI" id="CHEBI:456215"/>
    </ligand>
</feature>
<feature type="binding site" evidence="1">
    <location>
        <begin position="57"/>
        <end position="59"/>
    </location>
    <ligand>
        <name>AMP</name>
        <dbReference type="ChEBI" id="CHEBI:456215"/>
    </ligand>
</feature>
<feature type="binding site" evidence="1">
    <location>
        <begin position="85"/>
        <end position="88"/>
    </location>
    <ligand>
        <name>AMP</name>
        <dbReference type="ChEBI" id="CHEBI:456215"/>
    </ligand>
</feature>
<feature type="binding site" evidence="1">
    <location>
        <position position="92"/>
    </location>
    <ligand>
        <name>AMP</name>
        <dbReference type="ChEBI" id="CHEBI:456215"/>
    </ligand>
</feature>
<feature type="binding site" evidence="1">
    <location>
        <position position="127"/>
    </location>
    <ligand>
        <name>ATP</name>
        <dbReference type="ChEBI" id="CHEBI:30616"/>
    </ligand>
</feature>
<feature type="binding site" evidence="1">
    <location>
        <position position="129"/>
    </location>
    <ligand>
        <name>AMP</name>
        <dbReference type="ChEBI" id="CHEBI:456215"/>
    </ligand>
</feature>
<feature type="binding site" evidence="1">
    <location>
        <position position="140"/>
    </location>
    <ligand>
        <name>AMP</name>
        <dbReference type="ChEBI" id="CHEBI:456215"/>
    </ligand>
</feature>
<feature type="binding site" evidence="1">
    <location>
        <position position="166"/>
    </location>
    <ligand>
        <name>ATP</name>
        <dbReference type="ChEBI" id="CHEBI:30616"/>
    </ligand>
</feature>
<dbReference type="EC" id="2.7.4.3" evidence="1"/>
<dbReference type="EMBL" id="FM211192">
    <property type="protein sequence ID" value="CAR71928.1"/>
    <property type="molecule type" value="Genomic_DNA"/>
</dbReference>
<dbReference type="SMR" id="B8ZS96"/>
<dbReference type="KEGG" id="mlb:MLBr01832"/>
<dbReference type="HOGENOM" id="CLU_032354_4_1_11"/>
<dbReference type="UniPathway" id="UPA00588">
    <property type="reaction ID" value="UER00649"/>
</dbReference>
<dbReference type="Proteomes" id="UP000006900">
    <property type="component" value="Chromosome"/>
</dbReference>
<dbReference type="GO" id="GO:0005737">
    <property type="term" value="C:cytoplasm"/>
    <property type="evidence" value="ECO:0007669"/>
    <property type="project" value="UniProtKB-SubCell"/>
</dbReference>
<dbReference type="GO" id="GO:0004017">
    <property type="term" value="F:adenylate kinase activity"/>
    <property type="evidence" value="ECO:0007669"/>
    <property type="project" value="UniProtKB-UniRule"/>
</dbReference>
<dbReference type="GO" id="GO:0005524">
    <property type="term" value="F:ATP binding"/>
    <property type="evidence" value="ECO:0007669"/>
    <property type="project" value="UniProtKB-UniRule"/>
</dbReference>
<dbReference type="GO" id="GO:0044209">
    <property type="term" value="P:AMP salvage"/>
    <property type="evidence" value="ECO:0007669"/>
    <property type="project" value="UniProtKB-UniRule"/>
</dbReference>
<dbReference type="CDD" id="cd01428">
    <property type="entry name" value="ADK"/>
    <property type="match status" value="1"/>
</dbReference>
<dbReference type="Gene3D" id="3.40.50.300">
    <property type="entry name" value="P-loop containing nucleotide triphosphate hydrolases"/>
    <property type="match status" value="1"/>
</dbReference>
<dbReference type="HAMAP" id="MF_00235">
    <property type="entry name" value="Adenylate_kinase_Adk"/>
    <property type="match status" value="1"/>
</dbReference>
<dbReference type="InterPro" id="IPR006259">
    <property type="entry name" value="Adenyl_kin_sub"/>
</dbReference>
<dbReference type="InterPro" id="IPR000850">
    <property type="entry name" value="Adenylat/UMP-CMP_kin"/>
</dbReference>
<dbReference type="InterPro" id="IPR033690">
    <property type="entry name" value="Adenylat_kinase_CS"/>
</dbReference>
<dbReference type="InterPro" id="IPR027417">
    <property type="entry name" value="P-loop_NTPase"/>
</dbReference>
<dbReference type="NCBIfam" id="TIGR01351">
    <property type="entry name" value="adk"/>
    <property type="match status" value="1"/>
</dbReference>
<dbReference type="NCBIfam" id="NF001381">
    <property type="entry name" value="PRK00279.1-3"/>
    <property type="match status" value="1"/>
</dbReference>
<dbReference type="NCBIfam" id="NF011100">
    <property type="entry name" value="PRK14527.1"/>
    <property type="match status" value="1"/>
</dbReference>
<dbReference type="NCBIfam" id="NF011105">
    <property type="entry name" value="PRK14532.1"/>
    <property type="match status" value="1"/>
</dbReference>
<dbReference type="PANTHER" id="PTHR23359">
    <property type="entry name" value="NUCLEOTIDE KINASE"/>
    <property type="match status" value="1"/>
</dbReference>
<dbReference type="Pfam" id="PF00406">
    <property type="entry name" value="ADK"/>
    <property type="match status" value="1"/>
</dbReference>
<dbReference type="PRINTS" id="PR00094">
    <property type="entry name" value="ADENYLTKNASE"/>
</dbReference>
<dbReference type="SUPFAM" id="SSF52540">
    <property type="entry name" value="P-loop containing nucleoside triphosphate hydrolases"/>
    <property type="match status" value="1"/>
</dbReference>
<dbReference type="PROSITE" id="PS00113">
    <property type="entry name" value="ADENYLATE_KINASE"/>
    <property type="match status" value="1"/>
</dbReference>
<name>KAD_MYCLB</name>
<comment type="function">
    <text evidence="1">Catalyzes the reversible transfer of the terminal phosphate group between ATP and AMP. Plays an important role in cellular energy homeostasis and in adenine nucleotide metabolism.</text>
</comment>
<comment type="catalytic activity">
    <reaction evidence="1">
        <text>AMP + ATP = 2 ADP</text>
        <dbReference type="Rhea" id="RHEA:12973"/>
        <dbReference type="ChEBI" id="CHEBI:30616"/>
        <dbReference type="ChEBI" id="CHEBI:456215"/>
        <dbReference type="ChEBI" id="CHEBI:456216"/>
        <dbReference type="EC" id="2.7.4.3"/>
    </reaction>
</comment>
<comment type="pathway">
    <text evidence="1">Purine metabolism; AMP biosynthesis via salvage pathway; AMP from ADP: step 1/1.</text>
</comment>
<comment type="subunit">
    <text evidence="1">Monomer.</text>
</comment>
<comment type="subcellular location">
    <subcellularLocation>
        <location evidence="1">Cytoplasm</location>
    </subcellularLocation>
</comment>
<comment type="domain">
    <text evidence="1">Consists of three domains, a large central CORE domain and two small peripheral domains, NMPbind and LID, which undergo movements during catalysis. The LID domain closes over the site of phosphoryl transfer upon ATP binding. Assembling and dissambling the active center during each catalytic cycle provides an effective means to prevent ATP hydrolysis.</text>
</comment>
<comment type="similarity">
    <text evidence="1">Belongs to the adenylate kinase family.</text>
</comment>
<evidence type="ECO:0000255" key="1">
    <source>
        <dbReference type="HAMAP-Rule" id="MF_00235"/>
    </source>
</evidence>
<accession>B8ZS96</accession>
<organism>
    <name type="scientific">Mycobacterium leprae (strain Br4923)</name>
    <dbReference type="NCBI Taxonomy" id="561304"/>
    <lineage>
        <taxon>Bacteria</taxon>
        <taxon>Bacillati</taxon>
        <taxon>Actinomycetota</taxon>
        <taxon>Actinomycetes</taxon>
        <taxon>Mycobacteriales</taxon>
        <taxon>Mycobacteriaceae</taxon>
        <taxon>Mycobacterium</taxon>
    </lineage>
</organism>
<sequence length="181" mass="20111">MRVVLLGPPGAGKGTQAQRLAEKLGIPQISTGELFRRNIEKDTKLGHEAKKYLDAGDLVPADLTNQLVDDRLNKSDTVDGFILDGYPRSLEQAKALHEMLERRGTDIDAVLEFRVSQAVVLERLKGRGRADDTDDVVINRMNIYRDETASLLEYYSSELKTIDAIGTMDEVFARALHALGK</sequence>
<reference key="1">
    <citation type="journal article" date="2009" name="Nat. Genet.">
        <title>Comparative genomic and phylogeographic analysis of Mycobacterium leprae.</title>
        <authorList>
            <person name="Monot M."/>
            <person name="Honore N."/>
            <person name="Garnier T."/>
            <person name="Zidane N."/>
            <person name="Sherafi D."/>
            <person name="Paniz-Mondolfi A."/>
            <person name="Matsuoka M."/>
            <person name="Taylor G.M."/>
            <person name="Donoghue H.D."/>
            <person name="Bouwman A."/>
            <person name="Mays S."/>
            <person name="Watson C."/>
            <person name="Lockwood D."/>
            <person name="Khamispour A."/>
            <person name="Dowlati Y."/>
            <person name="Jianping S."/>
            <person name="Rea T.H."/>
            <person name="Vera-Cabrera L."/>
            <person name="Stefani M.M."/>
            <person name="Banu S."/>
            <person name="Macdonald M."/>
            <person name="Sapkota B.R."/>
            <person name="Spencer J.S."/>
            <person name="Thomas J."/>
            <person name="Harshman K."/>
            <person name="Singh P."/>
            <person name="Busso P."/>
            <person name="Gattiker A."/>
            <person name="Rougemont J."/>
            <person name="Brennan P.J."/>
            <person name="Cole S.T."/>
        </authorList>
    </citation>
    <scope>NUCLEOTIDE SEQUENCE [LARGE SCALE GENOMIC DNA]</scope>
    <source>
        <strain>Br4923</strain>
    </source>
</reference>
<keyword id="KW-0067">ATP-binding</keyword>
<keyword id="KW-0963">Cytoplasm</keyword>
<keyword id="KW-0418">Kinase</keyword>
<keyword id="KW-0545">Nucleotide biosynthesis</keyword>
<keyword id="KW-0547">Nucleotide-binding</keyword>
<keyword id="KW-0808">Transferase</keyword>
<proteinExistence type="inferred from homology"/>
<protein>
    <recommendedName>
        <fullName evidence="1">Adenylate kinase</fullName>
        <shortName evidence="1">AK</shortName>
        <ecNumber evidence="1">2.7.4.3</ecNumber>
    </recommendedName>
    <alternativeName>
        <fullName evidence="1">ATP-AMP transphosphorylase</fullName>
    </alternativeName>
    <alternativeName>
        <fullName evidence="1">ATP:AMP phosphotransferase</fullName>
    </alternativeName>
    <alternativeName>
        <fullName evidence="1">Adenylate monophosphate kinase</fullName>
    </alternativeName>
</protein>
<gene>
    <name evidence="1" type="primary">adk</name>
    <name type="ordered locus">MLBr01832</name>
</gene>